<evidence type="ECO:0000255" key="1">
    <source>
        <dbReference type="HAMAP-Rule" id="MF_01344"/>
    </source>
</evidence>
<protein>
    <recommendedName>
        <fullName evidence="1">Cytochrome b6-f complex subunit 4</fullName>
    </recommendedName>
    <alternativeName>
        <fullName evidence="1">17 kDa polypeptide</fullName>
    </alternativeName>
</protein>
<proteinExistence type="inferred from homology"/>
<dbReference type="EMBL" id="BX569694">
    <property type="protein sequence ID" value="CAE08481.1"/>
    <property type="molecule type" value="Genomic_DNA"/>
</dbReference>
<dbReference type="RefSeq" id="WP_011128824.1">
    <property type="nucleotide sequence ID" value="NC_005070.1"/>
</dbReference>
<dbReference type="SMR" id="Q7U4U7"/>
<dbReference type="STRING" id="84588.SYNW1966"/>
<dbReference type="KEGG" id="syw:SYNW1966"/>
<dbReference type="eggNOG" id="COG1290">
    <property type="taxonomic scope" value="Bacteria"/>
</dbReference>
<dbReference type="HOGENOM" id="CLU_112652_0_0_3"/>
<dbReference type="BioCyc" id="MetaCyc:TX72_RS09905-MONOMER"/>
<dbReference type="Proteomes" id="UP000001422">
    <property type="component" value="Chromosome"/>
</dbReference>
<dbReference type="GO" id="GO:0031676">
    <property type="term" value="C:plasma membrane-derived thylakoid membrane"/>
    <property type="evidence" value="ECO:0007669"/>
    <property type="project" value="UniProtKB-SubCell"/>
</dbReference>
<dbReference type="GO" id="GO:0045158">
    <property type="term" value="F:electron transporter, transferring electrons within cytochrome b6/f complex of photosystem II activity"/>
    <property type="evidence" value="ECO:0007669"/>
    <property type="project" value="UniProtKB-UniRule"/>
</dbReference>
<dbReference type="GO" id="GO:0045156">
    <property type="term" value="F:electron transporter, transferring electrons within the cyclic electron transport pathway of photosynthesis activity"/>
    <property type="evidence" value="ECO:0007669"/>
    <property type="project" value="InterPro"/>
</dbReference>
<dbReference type="GO" id="GO:0008121">
    <property type="term" value="F:ubiquinol-cytochrome-c reductase activity"/>
    <property type="evidence" value="ECO:0007669"/>
    <property type="project" value="TreeGrafter"/>
</dbReference>
<dbReference type="GO" id="GO:0009767">
    <property type="term" value="P:photosynthetic electron transport chain"/>
    <property type="evidence" value="ECO:0007669"/>
    <property type="project" value="InterPro"/>
</dbReference>
<dbReference type="CDD" id="cd00290">
    <property type="entry name" value="cytochrome_b_C"/>
    <property type="match status" value="1"/>
</dbReference>
<dbReference type="FunFam" id="1.10.287.980:FF:000001">
    <property type="entry name" value="Cytochrome b6-f complex subunit 4"/>
    <property type="match status" value="1"/>
</dbReference>
<dbReference type="FunFam" id="1.20.5.510:FF:000002">
    <property type="entry name" value="Cytochrome b6-f complex subunit 4"/>
    <property type="match status" value="1"/>
</dbReference>
<dbReference type="Gene3D" id="1.10.287.980">
    <property type="entry name" value="plastocyanin oxidoreductase"/>
    <property type="match status" value="1"/>
</dbReference>
<dbReference type="Gene3D" id="1.20.5.510">
    <property type="entry name" value="Single helix bin"/>
    <property type="match status" value="1"/>
</dbReference>
<dbReference type="HAMAP" id="MF_01344">
    <property type="entry name" value="Cytb6_f_subIV"/>
    <property type="match status" value="1"/>
</dbReference>
<dbReference type="InterPro" id="IPR005798">
    <property type="entry name" value="Cyt_b/b6_C"/>
</dbReference>
<dbReference type="InterPro" id="IPR036150">
    <property type="entry name" value="Cyt_b/b6_C_sf"/>
</dbReference>
<dbReference type="InterPro" id="IPR005870">
    <property type="entry name" value="Cyt_b6/f_cplx_suIV"/>
</dbReference>
<dbReference type="InterPro" id="IPR048260">
    <property type="entry name" value="Cytochrome_b_C_euk/bac"/>
</dbReference>
<dbReference type="NCBIfam" id="TIGR01156">
    <property type="entry name" value="cytb6_f_IV"/>
    <property type="match status" value="1"/>
</dbReference>
<dbReference type="PANTHER" id="PTHR19271">
    <property type="entry name" value="CYTOCHROME B"/>
    <property type="match status" value="1"/>
</dbReference>
<dbReference type="PANTHER" id="PTHR19271:SF41">
    <property type="entry name" value="CYTOCHROME B_B6 C-TERMINAL REGION PROFILE DOMAIN-CONTAINING PROTEIN"/>
    <property type="match status" value="1"/>
</dbReference>
<dbReference type="Pfam" id="PF00032">
    <property type="entry name" value="Cytochrom_B_C"/>
    <property type="match status" value="1"/>
</dbReference>
<dbReference type="PIRSF" id="PIRSF000033">
    <property type="entry name" value="B6f_17K"/>
    <property type="match status" value="1"/>
</dbReference>
<dbReference type="SUPFAM" id="SSF81648">
    <property type="entry name" value="a domain/subunit of cytochrome bc1 complex (Ubiquinol-cytochrome c reductase)"/>
    <property type="match status" value="1"/>
</dbReference>
<dbReference type="PROSITE" id="PS51003">
    <property type="entry name" value="CYTB_CTER"/>
    <property type="match status" value="1"/>
</dbReference>
<reference key="1">
    <citation type="journal article" date="2003" name="Nature">
        <title>The genome of a motile marine Synechococcus.</title>
        <authorList>
            <person name="Palenik B."/>
            <person name="Brahamsha B."/>
            <person name="Larimer F.W."/>
            <person name="Land M.L."/>
            <person name="Hauser L."/>
            <person name="Chain P."/>
            <person name="Lamerdin J.E."/>
            <person name="Regala W."/>
            <person name="Allen E.E."/>
            <person name="McCarren J."/>
            <person name="Paulsen I.T."/>
            <person name="Dufresne A."/>
            <person name="Partensky F."/>
            <person name="Webb E.A."/>
            <person name="Waterbury J."/>
        </authorList>
    </citation>
    <scope>NUCLEOTIDE SEQUENCE [LARGE SCALE GENOMIC DNA]</scope>
    <source>
        <strain>WH8102</strain>
    </source>
</reference>
<name>PETD_PARMW</name>
<accession>Q7U4U7</accession>
<comment type="function">
    <text evidence="1">Component of the cytochrome b6-f complex, which mediates electron transfer between photosystem II (PSII) and photosystem I (PSI), cyclic electron flow around PSI, and state transitions.</text>
</comment>
<comment type="subunit">
    <text evidence="1">The 4 large subunits of the cytochrome b6-f complex are cytochrome b6, subunit IV (17 kDa polypeptide, PetD), cytochrome f and the Rieske protein, while the 4 small subunits are PetG, PetL, PetM and PetN. The complex functions as a dimer.</text>
</comment>
<comment type="subcellular location">
    <subcellularLocation>
        <location evidence="1">Cellular thylakoid membrane</location>
        <topology evidence="1">Multi-pass membrane protein</topology>
    </subcellularLocation>
</comment>
<comment type="similarity">
    <text evidence="1">Belongs to the cytochrome b family. PetD subfamily.</text>
</comment>
<sequence length="160" mass="17726">MHILKKPDLSDPKMRAKLAKGMGHNYYGEPAWPNDLLYIFPVVILGTIACIVGLAVLDPAMLADKADPFATPLEILPEWYLYPVFQILRVVPNKLLGIALQTLVPLGLMLVPFIESFNKFQNPFRRPVAMTVFLFGTVTTIYLGIGAALPIDKSLTLGLF</sequence>
<organism>
    <name type="scientific">Parasynechococcus marenigrum (strain WH8102)</name>
    <dbReference type="NCBI Taxonomy" id="84588"/>
    <lineage>
        <taxon>Bacteria</taxon>
        <taxon>Bacillati</taxon>
        <taxon>Cyanobacteriota</taxon>
        <taxon>Cyanophyceae</taxon>
        <taxon>Synechococcales</taxon>
        <taxon>Prochlorococcaceae</taxon>
        <taxon>Parasynechococcus</taxon>
        <taxon>Parasynechococcus marenigrum</taxon>
    </lineage>
</organism>
<gene>
    <name evidence="1" type="primary">petD</name>
    <name type="ordered locus">SYNW1966</name>
</gene>
<keyword id="KW-0249">Electron transport</keyword>
<keyword id="KW-0472">Membrane</keyword>
<keyword id="KW-0602">Photosynthesis</keyword>
<keyword id="KW-0793">Thylakoid</keyword>
<keyword id="KW-0812">Transmembrane</keyword>
<keyword id="KW-1133">Transmembrane helix</keyword>
<keyword id="KW-0813">Transport</keyword>
<feature type="chain" id="PRO_0000061912" description="Cytochrome b6-f complex subunit 4">
    <location>
        <begin position="1"/>
        <end position="160"/>
    </location>
</feature>
<feature type="transmembrane region" description="Helical" evidence="1">
    <location>
        <begin position="36"/>
        <end position="56"/>
    </location>
</feature>
<feature type="transmembrane region" description="Helical" evidence="1">
    <location>
        <begin position="95"/>
        <end position="115"/>
    </location>
</feature>
<feature type="transmembrane region" description="Helical" evidence="1">
    <location>
        <begin position="131"/>
        <end position="151"/>
    </location>
</feature>